<sequence length="243" mass="26670">SDDLSFKFKNFSQNGKDLSFQGDASVIETGVLQLNKVGNNLPDETGGIARYIAPIHIWNCNTGEVASFITSFSFFMETSANPKAATDGLTFFLAPPDSPLRRAGGYFGLFEDTKDNDSSYQTVAVEFDTIGSPVNFDDPGFPHIGIDVNRVKSINAERWNKRYGLNNVANVEIIYEASSKTLTASLTYPSDQTSISVTSIVDLKEILPEWVSVGFSGGTYIGRQATHEVLNWYFTSNLINTNS</sequence>
<name>LEC1_ULEEU</name>
<accession>P22972</accession>
<protein>
    <recommendedName>
        <fullName>Anti-H(O) lectin 1</fullName>
    </recommendedName>
    <alternativeName>
        <fullName>Anti-H(O) lectin I</fullName>
    </alternativeName>
    <alternativeName>
        <fullName>UEA-I</fullName>
    </alternativeName>
</protein>
<reference key="1">
    <citation type="journal article" date="1991" name="J. Biochem.">
        <title>The primary structures of two types of the Ulex europeus seed lectin.</title>
        <authorList>
            <person name="Konami Y."/>
            <person name="Yamamoto K."/>
            <person name="Osawa T."/>
        </authorList>
    </citation>
    <scope>PROTEIN SEQUENCE</scope>
    <source>
        <tissue>Seed</tissue>
    </source>
</reference>
<reference key="2">
    <citation type="journal article" date="1991" name="Biol. Chem. Hoppe-Seyler">
        <title>Purification and characterization of a new type lactose-binding Ulex europaeus lectin by affinity chromatography.</title>
        <authorList>
            <person name="Konami Y."/>
            <person name="Yamamoto K."/>
            <person name="Osawa T."/>
        </authorList>
    </citation>
    <scope>PROTEIN SEQUENCE OF 1-34</scope>
</reference>
<dbReference type="PIR" id="JX0162">
    <property type="entry name" value="JX0162"/>
</dbReference>
<dbReference type="PDB" id="1FX5">
    <property type="method" value="X-ray"/>
    <property type="resolution" value="2.20 A"/>
    <property type="chains" value="A/B=1-242"/>
</dbReference>
<dbReference type="PDB" id="1JXN">
    <property type="method" value="X-ray"/>
    <property type="resolution" value="2.30 A"/>
    <property type="chains" value="A/B/C/D=1-243"/>
</dbReference>
<dbReference type="PDBsum" id="1FX5"/>
<dbReference type="PDBsum" id="1JXN"/>
<dbReference type="SMR" id="P22972"/>
<dbReference type="UniLectin" id="P22972"/>
<dbReference type="iPTMnet" id="P22972"/>
<dbReference type="EvolutionaryTrace" id="P22972"/>
<dbReference type="GO" id="GO:0030246">
    <property type="term" value="F:carbohydrate binding"/>
    <property type="evidence" value="ECO:0007669"/>
    <property type="project" value="UniProtKB-KW"/>
</dbReference>
<dbReference type="GO" id="GO:0046872">
    <property type="term" value="F:metal ion binding"/>
    <property type="evidence" value="ECO:0007669"/>
    <property type="project" value="UniProtKB-KW"/>
</dbReference>
<dbReference type="CDD" id="cd06899">
    <property type="entry name" value="lectin_legume_LecRK_Arcelin_ConA"/>
    <property type="match status" value="1"/>
</dbReference>
<dbReference type="Gene3D" id="2.60.120.200">
    <property type="match status" value="1"/>
</dbReference>
<dbReference type="InterPro" id="IPR013320">
    <property type="entry name" value="ConA-like_dom_sf"/>
</dbReference>
<dbReference type="InterPro" id="IPR016363">
    <property type="entry name" value="L-lectin"/>
</dbReference>
<dbReference type="InterPro" id="IPR000985">
    <property type="entry name" value="Lectin_LegA_CS"/>
</dbReference>
<dbReference type="InterPro" id="IPR019825">
    <property type="entry name" value="Lectin_legB_Mn/Ca_BS"/>
</dbReference>
<dbReference type="InterPro" id="IPR001220">
    <property type="entry name" value="Legume_lectin_dom"/>
</dbReference>
<dbReference type="InterPro" id="IPR050258">
    <property type="entry name" value="Leguminous_Lectin"/>
</dbReference>
<dbReference type="PANTHER" id="PTHR32401">
    <property type="entry name" value="CONCANAVALIN A-LIKE LECTIN FAMILY PROTEIN"/>
    <property type="match status" value="1"/>
</dbReference>
<dbReference type="PANTHER" id="PTHR32401:SF45">
    <property type="entry name" value="LECTIN"/>
    <property type="match status" value="1"/>
</dbReference>
<dbReference type="Pfam" id="PF00139">
    <property type="entry name" value="Lectin_legB"/>
    <property type="match status" value="1"/>
</dbReference>
<dbReference type="PIRSF" id="PIRSF002690">
    <property type="entry name" value="L-type_lectin_plant"/>
    <property type="match status" value="1"/>
</dbReference>
<dbReference type="SUPFAM" id="SSF49899">
    <property type="entry name" value="Concanavalin A-like lectins/glucanases"/>
    <property type="match status" value="1"/>
</dbReference>
<dbReference type="PROSITE" id="PS00308">
    <property type="entry name" value="LECTIN_LEGUME_ALPHA"/>
    <property type="match status" value="1"/>
</dbReference>
<dbReference type="PROSITE" id="PS00307">
    <property type="entry name" value="LECTIN_LEGUME_BETA"/>
    <property type="match status" value="1"/>
</dbReference>
<feature type="chain" id="PRO_0000105111" description="Anti-H(O) lectin 1">
    <location>
        <begin position="1"/>
        <end position="243"/>
    </location>
</feature>
<feature type="binding site" evidence="1">
    <location>
        <position position="126"/>
    </location>
    <ligand>
        <name>Mn(2+)</name>
        <dbReference type="ChEBI" id="CHEBI:29035"/>
    </ligand>
</feature>
<feature type="binding site" evidence="1">
    <location>
        <position position="128"/>
    </location>
    <ligand>
        <name>Ca(2+)</name>
        <dbReference type="ChEBI" id="CHEBI:29108"/>
    </ligand>
</feature>
<feature type="binding site" evidence="1">
    <location>
        <position position="128"/>
    </location>
    <ligand>
        <name>Mn(2+)</name>
        <dbReference type="ChEBI" id="CHEBI:29035"/>
    </ligand>
</feature>
<feature type="binding site" evidence="1">
    <location>
        <position position="135"/>
    </location>
    <ligand>
        <name>Ca(2+)</name>
        <dbReference type="ChEBI" id="CHEBI:29108"/>
    </ligand>
</feature>
<feature type="binding site" evidence="1">
    <location>
        <position position="138"/>
    </location>
    <ligand>
        <name>Ca(2+)</name>
        <dbReference type="ChEBI" id="CHEBI:29108"/>
    </ligand>
</feature>
<feature type="binding site" evidence="1">
    <location>
        <position position="138"/>
    </location>
    <ligand>
        <name>Mn(2+)</name>
        <dbReference type="ChEBI" id="CHEBI:29035"/>
    </ligand>
</feature>
<feature type="binding site" evidence="1">
    <location>
        <position position="143"/>
    </location>
    <ligand>
        <name>Mn(2+)</name>
        <dbReference type="ChEBI" id="CHEBI:29035"/>
    </ligand>
</feature>
<feature type="glycosylation site" description="N-linked (GlcNAc...) asparagine; partial" evidence="2">
    <location>
        <position position="10"/>
    </location>
</feature>
<feature type="glycosylation site" description="N-linked (GlcNAc...) asparagine" evidence="2">
    <location>
        <position position="116"/>
    </location>
</feature>
<feature type="strand" evidence="4">
    <location>
        <begin position="3"/>
        <end position="10"/>
    </location>
</feature>
<feature type="strand" evidence="4">
    <location>
        <begin position="16"/>
        <end position="22"/>
    </location>
</feature>
<feature type="strand" evidence="4">
    <location>
        <begin position="32"/>
        <end position="34"/>
    </location>
</feature>
<feature type="strand" evidence="4">
    <location>
        <begin position="38"/>
        <end position="41"/>
    </location>
</feature>
<feature type="strand" evidence="4">
    <location>
        <begin position="43"/>
        <end position="53"/>
    </location>
</feature>
<feature type="turn" evidence="4">
    <location>
        <begin position="60"/>
        <end position="63"/>
    </location>
</feature>
<feature type="strand" evidence="4">
    <location>
        <begin position="67"/>
        <end position="80"/>
    </location>
</feature>
<feature type="helix" evidence="4">
    <location>
        <begin position="82"/>
        <end position="84"/>
    </location>
</feature>
<feature type="strand" evidence="4">
    <location>
        <begin position="88"/>
        <end position="94"/>
    </location>
</feature>
<feature type="helix" evidence="4">
    <location>
        <begin position="104"/>
        <end position="106"/>
    </location>
</feature>
<feature type="turn" evidence="4">
    <location>
        <begin position="107"/>
        <end position="109"/>
    </location>
</feature>
<feature type="strand" evidence="4">
    <location>
        <begin position="110"/>
        <end position="113"/>
    </location>
</feature>
<feature type="helix" evidence="4">
    <location>
        <begin position="118"/>
        <end position="120"/>
    </location>
</feature>
<feature type="strand" evidence="4">
    <location>
        <begin position="123"/>
        <end position="128"/>
    </location>
</feature>
<feature type="turn" evidence="4">
    <location>
        <begin position="132"/>
        <end position="134"/>
    </location>
</feature>
<feature type="strand" evidence="4">
    <location>
        <begin position="143"/>
        <end position="152"/>
    </location>
</feature>
<feature type="strand" evidence="4">
    <location>
        <begin position="154"/>
        <end position="158"/>
    </location>
</feature>
<feature type="helix" evidence="4">
    <location>
        <begin position="165"/>
        <end position="167"/>
    </location>
</feature>
<feature type="strand" evidence="4">
    <location>
        <begin position="169"/>
        <end position="176"/>
    </location>
</feature>
<feature type="turn" evidence="4">
    <location>
        <begin position="177"/>
        <end position="180"/>
    </location>
</feature>
<feature type="strand" evidence="4">
    <location>
        <begin position="181"/>
        <end position="187"/>
    </location>
</feature>
<feature type="turn" evidence="4">
    <location>
        <begin position="189"/>
        <end position="191"/>
    </location>
</feature>
<feature type="strand" evidence="4">
    <location>
        <begin position="194"/>
        <end position="200"/>
    </location>
</feature>
<feature type="helix" evidence="4">
    <location>
        <begin position="203"/>
        <end position="205"/>
    </location>
</feature>
<feature type="strand" evidence="4">
    <location>
        <begin position="209"/>
        <end position="220"/>
    </location>
</feature>
<feature type="strand" evidence="4">
    <location>
        <begin position="225"/>
        <end position="239"/>
    </location>
</feature>
<comment type="function">
    <text>L-fucose specific lectin.</text>
</comment>
<comment type="similarity">
    <text evidence="3">Belongs to the leguminous lectin family.</text>
</comment>
<organism>
    <name type="scientific">Ulex europaeus</name>
    <name type="common">Furze</name>
    <dbReference type="NCBI Taxonomy" id="3902"/>
    <lineage>
        <taxon>Eukaryota</taxon>
        <taxon>Viridiplantae</taxon>
        <taxon>Streptophyta</taxon>
        <taxon>Embryophyta</taxon>
        <taxon>Tracheophyta</taxon>
        <taxon>Spermatophyta</taxon>
        <taxon>Magnoliopsida</taxon>
        <taxon>eudicotyledons</taxon>
        <taxon>Gunneridae</taxon>
        <taxon>Pentapetalae</taxon>
        <taxon>rosids</taxon>
        <taxon>fabids</taxon>
        <taxon>Fabales</taxon>
        <taxon>Fabaceae</taxon>
        <taxon>Papilionoideae</taxon>
        <taxon>50 kb inversion clade</taxon>
        <taxon>genistoids sensu lato</taxon>
        <taxon>core genistoids</taxon>
        <taxon>Genisteae</taxon>
        <taxon>Ulex</taxon>
    </lineage>
</organism>
<proteinExistence type="evidence at protein level"/>
<evidence type="ECO:0000250" key="1"/>
<evidence type="ECO:0000269" key="2">
    <source>
    </source>
</evidence>
<evidence type="ECO:0000305" key="3"/>
<evidence type="ECO:0007829" key="4">
    <source>
        <dbReference type="PDB" id="1FX5"/>
    </source>
</evidence>
<keyword id="KW-0002">3D-structure</keyword>
<keyword id="KW-0106">Calcium</keyword>
<keyword id="KW-0903">Direct protein sequencing</keyword>
<keyword id="KW-0325">Glycoprotein</keyword>
<keyword id="KW-0430">Lectin</keyword>
<keyword id="KW-0464">Manganese</keyword>
<keyword id="KW-0479">Metal-binding</keyword>